<evidence type="ECO:0000255" key="1"/>
<evidence type="ECO:0000255" key="2">
    <source>
        <dbReference type="PROSITE-ProRule" id="PRU00388"/>
    </source>
</evidence>
<evidence type="ECO:0000256" key="3">
    <source>
        <dbReference type="SAM" id="MobiDB-lite"/>
    </source>
</evidence>
<evidence type="ECO:0000269" key="4">
    <source>
    </source>
</evidence>
<evidence type="ECO:0000305" key="5"/>
<comment type="function">
    <text evidence="4">Accepts the ubiquitin from the E1 complex and catalyzes its covalent attachment to other proteins.</text>
</comment>
<comment type="catalytic activity">
    <reaction evidence="2">
        <text>S-ubiquitinyl-[E1 ubiquitin-activating enzyme]-L-cysteine + [E2 ubiquitin-conjugating enzyme]-L-cysteine = [E1 ubiquitin-activating enzyme]-L-cysteine + S-ubiquitinyl-[E2 ubiquitin-conjugating enzyme]-L-cysteine.</text>
        <dbReference type="EC" id="2.3.2.23"/>
    </reaction>
</comment>
<comment type="pathway">
    <text evidence="2">Protein modification; protein ubiquitination.</text>
</comment>
<comment type="subcellular location">
    <subcellularLocation>
        <location evidence="5">Membrane</location>
        <topology evidence="5">Single-pass membrane protein</topology>
    </subcellularLocation>
</comment>
<comment type="similarity">
    <text evidence="2">Belongs to the ubiquitin-conjugating enzyme family.</text>
</comment>
<keyword id="KW-0067">ATP-binding</keyword>
<keyword id="KW-0472">Membrane</keyword>
<keyword id="KW-0547">Nucleotide-binding</keyword>
<keyword id="KW-1185">Reference proteome</keyword>
<keyword id="KW-0808">Transferase</keyword>
<keyword id="KW-0812">Transmembrane</keyword>
<keyword id="KW-1133">Transmembrane helix</keyword>
<keyword id="KW-0833">Ubl conjugation pathway</keyword>
<feature type="chain" id="PRO_0000345199" description="Ubiquitin-conjugating enzyme E2 34">
    <location>
        <begin position="1"/>
        <end position="237"/>
    </location>
</feature>
<feature type="transmembrane region" description="Helical" evidence="1">
    <location>
        <begin position="214"/>
        <end position="234"/>
    </location>
</feature>
<feature type="domain" description="UBC core" evidence="2">
    <location>
        <begin position="5"/>
        <end position="162"/>
    </location>
</feature>
<feature type="region of interest" description="Disordered" evidence="3">
    <location>
        <begin position="168"/>
        <end position="207"/>
    </location>
</feature>
<feature type="compositionally biased region" description="Basic and acidic residues" evidence="3">
    <location>
        <begin position="180"/>
        <end position="204"/>
    </location>
</feature>
<feature type="active site" description="Glycyl thioester intermediate" evidence="2">
    <location>
        <position position="87"/>
    </location>
</feature>
<gene>
    <name type="primary">UBC34</name>
    <name type="ordered locus">At1g17280</name>
    <name type="ORF">F20D23.1</name>
</gene>
<proteinExistence type="evidence at transcript level"/>
<dbReference type="EC" id="2.3.2.23"/>
<dbReference type="EMBL" id="AC007651">
    <property type="protein sequence ID" value="AAD50006.1"/>
    <property type="molecule type" value="Genomic_DNA"/>
</dbReference>
<dbReference type="EMBL" id="CP002684">
    <property type="protein sequence ID" value="AEE29567.1"/>
    <property type="molecule type" value="Genomic_DNA"/>
</dbReference>
<dbReference type="EMBL" id="CP002684">
    <property type="protein sequence ID" value="AEE29568.1"/>
    <property type="molecule type" value="Genomic_DNA"/>
</dbReference>
<dbReference type="EMBL" id="CP002684">
    <property type="protein sequence ID" value="ANM59253.1"/>
    <property type="molecule type" value="Genomic_DNA"/>
</dbReference>
<dbReference type="EMBL" id="CP002684">
    <property type="protein sequence ID" value="ANM59254.1"/>
    <property type="molecule type" value="Genomic_DNA"/>
</dbReference>
<dbReference type="EMBL" id="CP002684">
    <property type="protein sequence ID" value="ANM59255.1"/>
    <property type="molecule type" value="Genomic_DNA"/>
</dbReference>
<dbReference type="EMBL" id="CP002684">
    <property type="protein sequence ID" value="ANM59256.1"/>
    <property type="molecule type" value="Genomic_DNA"/>
</dbReference>
<dbReference type="EMBL" id="CP002684">
    <property type="protein sequence ID" value="ANM59257.1"/>
    <property type="molecule type" value="Genomic_DNA"/>
</dbReference>
<dbReference type="EMBL" id="CP002684">
    <property type="protein sequence ID" value="ANM59259.1"/>
    <property type="molecule type" value="Genomic_DNA"/>
</dbReference>
<dbReference type="EMBL" id="BT003073">
    <property type="protein sequence ID" value="AAO23638.1"/>
    <property type="molecule type" value="mRNA"/>
</dbReference>
<dbReference type="EMBL" id="AK227344">
    <property type="protein sequence ID" value="BAE99355.1"/>
    <property type="molecule type" value="mRNA"/>
</dbReference>
<dbReference type="EMBL" id="AY084676">
    <property type="protein sequence ID" value="AAM61238.1"/>
    <property type="molecule type" value="mRNA"/>
</dbReference>
<dbReference type="EMBL" id="DQ027047">
    <property type="protein sequence ID" value="AAY44873.1"/>
    <property type="molecule type" value="mRNA"/>
</dbReference>
<dbReference type="PIR" id="C86309">
    <property type="entry name" value="C86309"/>
</dbReference>
<dbReference type="RefSeq" id="NP_001077554.1">
    <property type="nucleotide sequence ID" value="NM_001084085.1"/>
</dbReference>
<dbReference type="RefSeq" id="NP_001319027.1">
    <property type="nucleotide sequence ID" value="NM_001332287.1"/>
</dbReference>
<dbReference type="RefSeq" id="NP_001321626.1">
    <property type="nucleotide sequence ID" value="NM_001332292.1"/>
</dbReference>
<dbReference type="RefSeq" id="NP_001321627.1">
    <property type="nucleotide sequence ID" value="NM_001332293.1"/>
</dbReference>
<dbReference type="RefSeq" id="NP_001321628.1">
    <property type="nucleotide sequence ID" value="NM_001332288.1"/>
</dbReference>
<dbReference type="RefSeq" id="NP_001321629.1">
    <property type="nucleotide sequence ID" value="NM_001332290.1"/>
</dbReference>
<dbReference type="RefSeq" id="NP_001321630.1">
    <property type="nucleotide sequence ID" value="NM_001332291.1"/>
</dbReference>
<dbReference type="RefSeq" id="NP_173172.1">
    <property type="nucleotide sequence ID" value="NM_101590.4"/>
</dbReference>
<dbReference type="SMR" id="Q9SHI7"/>
<dbReference type="BioGRID" id="23540">
    <property type="interactions" value="448"/>
</dbReference>
<dbReference type="FunCoup" id="Q9SHI7">
    <property type="interactions" value="4747"/>
</dbReference>
<dbReference type="IntAct" id="Q9SHI7">
    <property type="interactions" value="449"/>
</dbReference>
<dbReference type="STRING" id="3702.Q9SHI7"/>
<dbReference type="TCDB" id="3.A.16.1.5">
    <property type="family name" value="the endoplasmic reticular retrotranslocon (er-rt) family"/>
</dbReference>
<dbReference type="PaxDb" id="3702-AT1G17280.1"/>
<dbReference type="ProteomicsDB" id="243214"/>
<dbReference type="EnsemblPlants" id="AT1G17280.1">
    <property type="protein sequence ID" value="AT1G17280.1"/>
    <property type="gene ID" value="AT1G17280"/>
</dbReference>
<dbReference type="EnsemblPlants" id="AT1G17280.2">
    <property type="protein sequence ID" value="AT1G17280.2"/>
    <property type="gene ID" value="AT1G17280"/>
</dbReference>
<dbReference type="EnsemblPlants" id="AT1G17280.3">
    <property type="protein sequence ID" value="AT1G17280.3"/>
    <property type="gene ID" value="AT1G17280"/>
</dbReference>
<dbReference type="EnsemblPlants" id="AT1G17280.5">
    <property type="protein sequence ID" value="AT1G17280.5"/>
    <property type="gene ID" value="AT1G17280"/>
</dbReference>
<dbReference type="EnsemblPlants" id="AT1G17280.6">
    <property type="protein sequence ID" value="AT1G17280.6"/>
    <property type="gene ID" value="AT1G17280"/>
</dbReference>
<dbReference type="EnsemblPlants" id="AT1G17280.7">
    <property type="protein sequence ID" value="AT1G17280.7"/>
    <property type="gene ID" value="AT1G17280"/>
</dbReference>
<dbReference type="EnsemblPlants" id="AT1G17280.8">
    <property type="protein sequence ID" value="AT1G17280.8"/>
    <property type="gene ID" value="AT1G17280"/>
</dbReference>
<dbReference type="EnsemblPlants" id="AT1G17280.9">
    <property type="protein sequence ID" value="AT1G17280.9"/>
    <property type="gene ID" value="AT1G17280"/>
</dbReference>
<dbReference type="GeneID" id="838300"/>
<dbReference type="Gramene" id="AT1G17280.1">
    <property type="protein sequence ID" value="AT1G17280.1"/>
    <property type="gene ID" value="AT1G17280"/>
</dbReference>
<dbReference type="Gramene" id="AT1G17280.2">
    <property type="protein sequence ID" value="AT1G17280.2"/>
    <property type="gene ID" value="AT1G17280"/>
</dbReference>
<dbReference type="Gramene" id="AT1G17280.3">
    <property type="protein sequence ID" value="AT1G17280.3"/>
    <property type="gene ID" value="AT1G17280"/>
</dbReference>
<dbReference type="Gramene" id="AT1G17280.5">
    <property type="protein sequence ID" value="AT1G17280.5"/>
    <property type="gene ID" value="AT1G17280"/>
</dbReference>
<dbReference type="Gramene" id="AT1G17280.6">
    <property type="protein sequence ID" value="AT1G17280.6"/>
    <property type="gene ID" value="AT1G17280"/>
</dbReference>
<dbReference type="Gramene" id="AT1G17280.7">
    <property type="protein sequence ID" value="AT1G17280.7"/>
    <property type="gene ID" value="AT1G17280"/>
</dbReference>
<dbReference type="Gramene" id="AT1G17280.8">
    <property type="protein sequence ID" value="AT1G17280.8"/>
    <property type="gene ID" value="AT1G17280"/>
</dbReference>
<dbReference type="Gramene" id="AT1G17280.9">
    <property type="protein sequence ID" value="AT1G17280.9"/>
    <property type="gene ID" value="AT1G17280"/>
</dbReference>
<dbReference type="KEGG" id="ath:AT1G17280"/>
<dbReference type="Araport" id="AT1G17280"/>
<dbReference type="TAIR" id="AT1G17280">
    <property type="gene designation" value="UBC34"/>
</dbReference>
<dbReference type="eggNOG" id="KOG0894">
    <property type="taxonomic scope" value="Eukaryota"/>
</dbReference>
<dbReference type="HOGENOM" id="CLU_041481_1_0_1"/>
<dbReference type="InParanoid" id="Q9SHI7"/>
<dbReference type="PhylomeDB" id="Q9SHI7"/>
<dbReference type="UniPathway" id="UPA00143"/>
<dbReference type="PRO" id="PR:Q9SHI7"/>
<dbReference type="Proteomes" id="UP000006548">
    <property type="component" value="Chromosome 1"/>
</dbReference>
<dbReference type="ExpressionAtlas" id="Q9SHI7">
    <property type="expression patterns" value="baseline and differential"/>
</dbReference>
<dbReference type="GO" id="GO:0016020">
    <property type="term" value="C:membrane"/>
    <property type="evidence" value="ECO:0007669"/>
    <property type="project" value="UniProtKB-SubCell"/>
</dbReference>
<dbReference type="GO" id="GO:0005524">
    <property type="term" value="F:ATP binding"/>
    <property type="evidence" value="ECO:0007669"/>
    <property type="project" value="UniProtKB-KW"/>
</dbReference>
<dbReference type="GO" id="GO:0061631">
    <property type="term" value="F:ubiquitin conjugating enzyme activity"/>
    <property type="evidence" value="ECO:0007669"/>
    <property type="project" value="UniProtKB-EC"/>
</dbReference>
<dbReference type="GO" id="GO:0004842">
    <property type="term" value="F:ubiquitin-protein transferase activity"/>
    <property type="evidence" value="ECO:0000314"/>
    <property type="project" value="TAIR"/>
</dbReference>
<dbReference type="GO" id="GO:0042631">
    <property type="term" value="P:cellular response to water deprivation"/>
    <property type="evidence" value="ECO:0000316"/>
    <property type="project" value="TAIR"/>
</dbReference>
<dbReference type="GO" id="GO:1902457">
    <property type="term" value="P:negative regulation of stomatal opening"/>
    <property type="evidence" value="ECO:0000316"/>
    <property type="project" value="TAIR"/>
</dbReference>
<dbReference type="GO" id="GO:0016567">
    <property type="term" value="P:protein ubiquitination"/>
    <property type="evidence" value="ECO:0007669"/>
    <property type="project" value="UniProtKB-UniPathway"/>
</dbReference>
<dbReference type="GO" id="GO:0006511">
    <property type="term" value="P:ubiquitin-dependent protein catabolic process"/>
    <property type="evidence" value="ECO:0000314"/>
    <property type="project" value="TAIR"/>
</dbReference>
<dbReference type="CDD" id="cd23799">
    <property type="entry name" value="UBCc_UBE2J"/>
    <property type="match status" value="1"/>
</dbReference>
<dbReference type="FunFam" id="3.10.110.10:FF:000059">
    <property type="entry name" value="Ubiquitin-conjugating enzyme E2 34"/>
    <property type="match status" value="1"/>
</dbReference>
<dbReference type="Gene3D" id="3.10.110.10">
    <property type="entry name" value="Ubiquitin Conjugating Enzyme"/>
    <property type="match status" value="1"/>
</dbReference>
<dbReference type="InterPro" id="IPR050113">
    <property type="entry name" value="Ub_conjugating_enzyme"/>
</dbReference>
<dbReference type="InterPro" id="IPR000608">
    <property type="entry name" value="UBQ-conjugat_E2_core"/>
</dbReference>
<dbReference type="InterPro" id="IPR016135">
    <property type="entry name" value="UBQ-conjugating_enzyme/RWD"/>
</dbReference>
<dbReference type="PANTHER" id="PTHR24067">
    <property type="entry name" value="UBIQUITIN-CONJUGATING ENZYME E2"/>
    <property type="match status" value="1"/>
</dbReference>
<dbReference type="Pfam" id="PF00179">
    <property type="entry name" value="UQ_con"/>
    <property type="match status" value="1"/>
</dbReference>
<dbReference type="SMART" id="SM00212">
    <property type="entry name" value="UBCc"/>
    <property type="match status" value="1"/>
</dbReference>
<dbReference type="SUPFAM" id="SSF54495">
    <property type="entry name" value="UBC-like"/>
    <property type="match status" value="1"/>
</dbReference>
<dbReference type="PROSITE" id="PS50127">
    <property type="entry name" value="UBC_2"/>
    <property type="match status" value="1"/>
</dbReference>
<accession>Q9SHI7</accession>
<accession>Q4TYX7</accession>
<sequence>MAEKACIKRLQKEYRALCKEPVSHVVARPSPNDILEWHYVLEGSEGTPFAGGFYYGKIKFPPEYPYKPPGITMTTPNGRFMTQKKICLSMSDFHPESWNPMWSVSSILTGLLSFMMDTSPTTGSVNTTVIEKQRLAKSSLAFNCKTPAFRKLFPEYVEKYNQQQLAEQATTQLTTPESPQKSDTKVESEKTIDPTKGDSEGGLKERKKNNKQGLPAWIILLLVSVFGVVMALPLLQL</sequence>
<reference key="1">
    <citation type="journal article" date="2000" name="Nature">
        <title>Sequence and analysis of chromosome 1 of the plant Arabidopsis thaliana.</title>
        <authorList>
            <person name="Theologis A."/>
            <person name="Ecker J.R."/>
            <person name="Palm C.J."/>
            <person name="Federspiel N.A."/>
            <person name="Kaul S."/>
            <person name="White O."/>
            <person name="Alonso J."/>
            <person name="Altafi H."/>
            <person name="Araujo R."/>
            <person name="Bowman C.L."/>
            <person name="Brooks S.Y."/>
            <person name="Buehler E."/>
            <person name="Chan A."/>
            <person name="Chao Q."/>
            <person name="Chen H."/>
            <person name="Cheuk R.F."/>
            <person name="Chin C.W."/>
            <person name="Chung M.K."/>
            <person name="Conn L."/>
            <person name="Conway A.B."/>
            <person name="Conway A.R."/>
            <person name="Creasy T.H."/>
            <person name="Dewar K."/>
            <person name="Dunn P."/>
            <person name="Etgu P."/>
            <person name="Feldblyum T.V."/>
            <person name="Feng J.-D."/>
            <person name="Fong B."/>
            <person name="Fujii C.Y."/>
            <person name="Gill J.E."/>
            <person name="Goldsmith A.D."/>
            <person name="Haas B."/>
            <person name="Hansen N.F."/>
            <person name="Hughes B."/>
            <person name="Huizar L."/>
            <person name="Hunter J.L."/>
            <person name="Jenkins J."/>
            <person name="Johnson-Hopson C."/>
            <person name="Khan S."/>
            <person name="Khaykin E."/>
            <person name="Kim C.J."/>
            <person name="Koo H.L."/>
            <person name="Kremenetskaia I."/>
            <person name="Kurtz D.B."/>
            <person name="Kwan A."/>
            <person name="Lam B."/>
            <person name="Langin-Hooper S."/>
            <person name="Lee A."/>
            <person name="Lee J.M."/>
            <person name="Lenz C.A."/>
            <person name="Li J.H."/>
            <person name="Li Y.-P."/>
            <person name="Lin X."/>
            <person name="Liu S.X."/>
            <person name="Liu Z.A."/>
            <person name="Luros J.S."/>
            <person name="Maiti R."/>
            <person name="Marziali A."/>
            <person name="Militscher J."/>
            <person name="Miranda M."/>
            <person name="Nguyen M."/>
            <person name="Nierman W.C."/>
            <person name="Osborne B.I."/>
            <person name="Pai G."/>
            <person name="Peterson J."/>
            <person name="Pham P.K."/>
            <person name="Rizzo M."/>
            <person name="Rooney T."/>
            <person name="Rowley D."/>
            <person name="Sakano H."/>
            <person name="Salzberg S.L."/>
            <person name="Schwartz J.R."/>
            <person name="Shinn P."/>
            <person name="Southwick A.M."/>
            <person name="Sun H."/>
            <person name="Tallon L.J."/>
            <person name="Tambunga G."/>
            <person name="Toriumi M.J."/>
            <person name="Town C.D."/>
            <person name="Utterback T."/>
            <person name="Van Aken S."/>
            <person name="Vaysberg M."/>
            <person name="Vysotskaia V.S."/>
            <person name="Walker M."/>
            <person name="Wu D."/>
            <person name="Yu G."/>
            <person name="Fraser C.M."/>
            <person name="Venter J.C."/>
            <person name="Davis R.W."/>
        </authorList>
    </citation>
    <scope>NUCLEOTIDE SEQUENCE [LARGE SCALE GENOMIC DNA]</scope>
    <source>
        <strain>cv. Columbia</strain>
    </source>
</reference>
<reference key="2">
    <citation type="journal article" date="2017" name="Plant J.">
        <title>Araport11: a complete reannotation of the Arabidopsis thaliana reference genome.</title>
        <authorList>
            <person name="Cheng C.Y."/>
            <person name="Krishnakumar V."/>
            <person name="Chan A.P."/>
            <person name="Thibaud-Nissen F."/>
            <person name="Schobel S."/>
            <person name="Town C.D."/>
        </authorList>
    </citation>
    <scope>GENOME REANNOTATION</scope>
    <source>
        <strain>cv. Columbia</strain>
    </source>
</reference>
<reference key="3">
    <citation type="journal article" date="2003" name="Science">
        <title>Empirical analysis of transcriptional activity in the Arabidopsis genome.</title>
        <authorList>
            <person name="Yamada K."/>
            <person name="Lim J."/>
            <person name="Dale J.M."/>
            <person name="Chen H."/>
            <person name="Shinn P."/>
            <person name="Palm C.J."/>
            <person name="Southwick A.M."/>
            <person name="Wu H.C."/>
            <person name="Kim C.J."/>
            <person name="Nguyen M."/>
            <person name="Pham P.K."/>
            <person name="Cheuk R.F."/>
            <person name="Karlin-Newmann G."/>
            <person name="Liu S.X."/>
            <person name="Lam B."/>
            <person name="Sakano H."/>
            <person name="Wu T."/>
            <person name="Yu G."/>
            <person name="Miranda M."/>
            <person name="Quach H.L."/>
            <person name="Tripp M."/>
            <person name="Chang C.H."/>
            <person name="Lee J.M."/>
            <person name="Toriumi M.J."/>
            <person name="Chan M.M."/>
            <person name="Tang C.C."/>
            <person name="Onodera C.S."/>
            <person name="Deng J.M."/>
            <person name="Akiyama K."/>
            <person name="Ansari Y."/>
            <person name="Arakawa T."/>
            <person name="Banh J."/>
            <person name="Banno F."/>
            <person name="Bowser L."/>
            <person name="Brooks S.Y."/>
            <person name="Carninci P."/>
            <person name="Chao Q."/>
            <person name="Choy N."/>
            <person name="Enju A."/>
            <person name="Goldsmith A.D."/>
            <person name="Gurjal M."/>
            <person name="Hansen N.F."/>
            <person name="Hayashizaki Y."/>
            <person name="Johnson-Hopson C."/>
            <person name="Hsuan V.W."/>
            <person name="Iida K."/>
            <person name="Karnes M."/>
            <person name="Khan S."/>
            <person name="Koesema E."/>
            <person name="Ishida J."/>
            <person name="Jiang P.X."/>
            <person name="Jones T."/>
            <person name="Kawai J."/>
            <person name="Kamiya A."/>
            <person name="Meyers C."/>
            <person name="Nakajima M."/>
            <person name="Narusaka M."/>
            <person name="Seki M."/>
            <person name="Sakurai T."/>
            <person name="Satou M."/>
            <person name="Tamse R."/>
            <person name="Vaysberg M."/>
            <person name="Wallender E.K."/>
            <person name="Wong C."/>
            <person name="Yamamura Y."/>
            <person name="Yuan S."/>
            <person name="Shinozaki K."/>
            <person name="Davis R.W."/>
            <person name="Theologis A."/>
            <person name="Ecker J.R."/>
        </authorList>
    </citation>
    <scope>NUCLEOTIDE SEQUENCE [LARGE SCALE MRNA]</scope>
    <source>
        <strain>cv. Columbia</strain>
    </source>
</reference>
<reference key="4">
    <citation type="submission" date="2006-07" db="EMBL/GenBank/DDBJ databases">
        <title>Large-scale analysis of RIKEN Arabidopsis full-length (RAFL) cDNAs.</title>
        <authorList>
            <person name="Totoki Y."/>
            <person name="Seki M."/>
            <person name="Ishida J."/>
            <person name="Nakajima M."/>
            <person name="Enju A."/>
            <person name="Kamiya A."/>
            <person name="Narusaka M."/>
            <person name="Shin-i T."/>
            <person name="Nakagawa M."/>
            <person name="Sakamoto N."/>
            <person name="Oishi K."/>
            <person name="Kohara Y."/>
            <person name="Kobayashi M."/>
            <person name="Toyoda A."/>
            <person name="Sakaki Y."/>
            <person name="Sakurai T."/>
            <person name="Iida K."/>
            <person name="Akiyama K."/>
            <person name="Satou M."/>
            <person name="Toyoda T."/>
            <person name="Konagaya A."/>
            <person name="Carninci P."/>
            <person name="Kawai J."/>
            <person name="Hayashizaki Y."/>
            <person name="Shinozaki K."/>
        </authorList>
    </citation>
    <scope>NUCLEOTIDE SEQUENCE [LARGE SCALE MRNA]</scope>
    <source>
        <strain>cv. Columbia</strain>
    </source>
</reference>
<reference key="5">
    <citation type="submission" date="2002-03" db="EMBL/GenBank/DDBJ databases">
        <title>Full-length cDNA from Arabidopsis thaliana.</title>
        <authorList>
            <person name="Brover V.V."/>
            <person name="Troukhan M.E."/>
            <person name="Alexandrov N.A."/>
            <person name="Lu Y.-P."/>
            <person name="Flavell R.B."/>
            <person name="Feldmann K.A."/>
        </authorList>
    </citation>
    <scope>NUCLEOTIDE SEQUENCE [LARGE SCALE MRNA]</scope>
</reference>
<reference key="6">
    <citation type="journal article" date="2005" name="Plant Physiol.">
        <title>Genome analysis and functional characterization of the E2 and RING-type E3 ligase ubiquitination enzymes of Arabidopsis.</title>
        <authorList>
            <person name="Kraft E."/>
            <person name="Stone S.L."/>
            <person name="Ma L."/>
            <person name="Su N."/>
            <person name="Gao Y."/>
            <person name="Lau O.-S."/>
            <person name="Deng X.-W."/>
            <person name="Callis J."/>
        </authorList>
    </citation>
    <scope>NUCLEOTIDE SEQUENCE [MRNA] OF 1-213</scope>
    <scope>FUNCTION</scope>
    <scope>TISSUE SPECIFICITY</scope>
    <scope>GENE FAMILY</scope>
    <scope>NOMENCLATURE</scope>
</reference>
<organism>
    <name type="scientific">Arabidopsis thaliana</name>
    <name type="common">Mouse-ear cress</name>
    <dbReference type="NCBI Taxonomy" id="3702"/>
    <lineage>
        <taxon>Eukaryota</taxon>
        <taxon>Viridiplantae</taxon>
        <taxon>Streptophyta</taxon>
        <taxon>Embryophyta</taxon>
        <taxon>Tracheophyta</taxon>
        <taxon>Spermatophyta</taxon>
        <taxon>Magnoliopsida</taxon>
        <taxon>eudicotyledons</taxon>
        <taxon>Gunneridae</taxon>
        <taxon>Pentapetalae</taxon>
        <taxon>rosids</taxon>
        <taxon>malvids</taxon>
        <taxon>Brassicales</taxon>
        <taxon>Brassicaceae</taxon>
        <taxon>Camelineae</taxon>
        <taxon>Arabidopsis</taxon>
    </lineage>
</organism>
<protein>
    <recommendedName>
        <fullName>Ubiquitin-conjugating enzyme E2 34</fullName>
        <ecNumber>2.3.2.23</ecNumber>
    </recommendedName>
    <alternativeName>
        <fullName>E2 ubiquitin-conjugating enzyme 34</fullName>
    </alternativeName>
    <alternativeName>
        <fullName>Ubiquitin carrier protein 34</fullName>
    </alternativeName>
</protein>
<name>UBC34_ARATH</name>